<comment type="function">
    <text evidence="1">Amidase that catalyzes the last step of diphthamide biosynthesis using ammonium and ATP. Diphthamide biosynthesis consists in the conversion of an L-histidine residue in the translation elongation factor eEF-2 (EEF2) to diphthamide (By similarity).</text>
</comment>
<comment type="catalytic activity">
    <reaction>
        <text>diphthine-[translation elongation factor 2] + NH4(+) + ATP = diphthamide-[translation elongation factor 2] + AMP + diphosphate + H(+)</text>
        <dbReference type="Rhea" id="RHEA:19753"/>
        <dbReference type="Rhea" id="RHEA-COMP:10172"/>
        <dbReference type="Rhea" id="RHEA-COMP:10174"/>
        <dbReference type="ChEBI" id="CHEBI:15378"/>
        <dbReference type="ChEBI" id="CHEBI:16692"/>
        <dbReference type="ChEBI" id="CHEBI:28938"/>
        <dbReference type="ChEBI" id="CHEBI:30616"/>
        <dbReference type="ChEBI" id="CHEBI:33019"/>
        <dbReference type="ChEBI" id="CHEBI:82696"/>
        <dbReference type="ChEBI" id="CHEBI:456215"/>
        <dbReference type="EC" id="6.3.1.14"/>
    </reaction>
</comment>
<comment type="pathway">
    <text>Protein modification; peptidyl-diphthamide biosynthesis.</text>
</comment>
<comment type="similarity">
    <text evidence="3">Belongs to the Diphthine--ammonia ligase family.</text>
</comment>
<proteinExistence type="evidence at transcript level"/>
<feature type="chain" id="PRO_0000282396" description="Diphthine--ammonia ligase">
    <location>
        <begin position="1"/>
        <end position="267"/>
    </location>
</feature>
<feature type="modified residue" description="Phosphotyrosine" evidence="2">
    <location>
        <position position="97"/>
    </location>
</feature>
<accession>Q2HJF5</accession>
<dbReference type="EC" id="6.3.1.14"/>
<dbReference type="EMBL" id="BC105462">
    <property type="protein sequence ID" value="AAI05463.1"/>
    <property type="molecule type" value="mRNA"/>
</dbReference>
<dbReference type="RefSeq" id="NP_001070484.1">
    <property type="nucleotide sequence ID" value="NM_001077016.1"/>
</dbReference>
<dbReference type="SMR" id="Q2HJF5"/>
<dbReference type="FunCoup" id="Q2HJF5">
    <property type="interactions" value="707"/>
</dbReference>
<dbReference type="STRING" id="9913.ENSBTAP00000051676"/>
<dbReference type="PaxDb" id="9913-ENSBTAP00000051676"/>
<dbReference type="Ensembl" id="ENSBTAT00000055382.3">
    <property type="protein sequence ID" value="ENSBTAP00000051676.2"/>
    <property type="gene ID" value="ENSBTAG00000001364.7"/>
</dbReference>
<dbReference type="GeneID" id="767944"/>
<dbReference type="KEGG" id="bta:767944"/>
<dbReference type="CTD" id="89978"/>
<dbReference type="VEuPathDB" id="HostDB:ENSBTAG00000001364"/>
<dbReference type="VGNC" id="VGNC:28181">
    <property type="gene designation" value="DPH6"/>
</dbReference>
<dbReference type="eggNOG" id="KOG2316">
    <property type="taxonomic scope" value="Eukaryota"/>
</dbReference>
<dbReference type="GeneTree" id="ENSGT00420000029820"/>
<dbReference type="HOGENOM" id="CLU_010289_0_1_1"/>
<dbReference type="InParanoid" id="Q2HJF5"/>
<dbReference type="OMA" id="NYALYWA"/>
<dbReference type="OrthoDB" id="686384at2759"/>
<dbReference type="TreeFam" id="TF313566"/>
<dbReference type="Reactome" id="R-BTA-5358493">
    <property type="pathway name" value="Synthesis of diphthamide-EEF2"/>
</dbReference>
<dbReference type="UniPathway" id="UPA00559"/>
<dbReference type="Proteomes" id="UP000009136">
    <property type="component" value="Chromosome 10"/>
</dbReference>
<dbReference type="Bgee" id="ENSBTAG00000001364">
    <property type="expression patterns" value="Expressed in oocyte and 108 other cell types or tissues"/>
</dbReference>
<dbReference type="GO" id="GO:0005524">
    <property type="term" value="F:ATP binding"/>
    <property type="evidence" value="ECO:0007669"/>
    <property type="project" value="UniProtKB-KW"/>
</dbReference>
<dbReference type="GO" id="GO:0017178">
    <property type="term" value="F:diphthine-ammonia ligase activity"/>
    <property type="evidence" value="ECO:0000318"/>
    <property type="project" value="GO_Central"/>
</dbReference>
<dbReference type="GO" id="GO:0017183">
    <property type="term" value="P:protein histidyl modification to diphthamide"/>
    <property type="evidence" value="ECO:0000318"/>
    <property type="project" value="GO_Central"/>
</dbReference>
<dbReference type="CDD" id="cd01994">
    <property type="entry name" value="AANH_PF0828-like"/>
    <property type="match status" value="1"/>
</dbReference>
<dbReference type="FunFam" id="3.90.1490.10:FF:000001">
    <property type="entry name" value="Diphthine--ammonia ligase"/>
    <property type="match status" value="1"/>
</dbReference>
<dbReference type="FunFam" id="3.40.50.620:FF:000069">
    <property type="entry name" value="diphthine--ammonia ligase"/>
    <property type="match status" value="1"/>
</dbReference>
<dbReference type="Gene3D" id="3.40.50.620">
    <property type="entry name" value="HUPs"/>
    <property type="match status" value="1"/>
</dbReference>
<dbReference type="Gene3D" id="3.90.1490.10">
    <property type="entry name" value="putative n-type atp pyrophosphatase, domain 2"/>
    <property type="match status" value="1"/>
</dbReference>
<dbReference type="InterPro" id="IPR002761">
    <property type="entry name" value="Diphthami_syn_dom"/>
</dbReference>
<dbReference type="InterPro" id="IPR030662">
    <property type="entry name" value="DPH6/MJ0570"/>
</dbReference>
<dbReference type="InterPro" id="IPR014729">
    <property type="entry name" value="Rossmann-like_a/b/a_fold"/>
</dbReference>
<dbReference type="NCBIfam" id="TIGR00290">
    <property type="entry name" value="MJ0570_dom"/>
    <property type="match status" value="1"/>
</dbReference>
<dbReference type="PANTHER" id="PTHR12196:SF2">
    <property type="entry name" value="DIPHTHINE--AMMONIA LIGASE"/>
    <property type="match status" value="1"/>
</dbReference>
<dbReference type="PANTHER" id="PTHR12196">
    <property type="entry name" value="DOMAIN OF UNKNOWN FUNCTION 71 DUF71 -CONTAINING PROTEIN"/>
    <property type="match status" value="1"/>
</dbReference>
<dbReference type="Pfam" id="PF01902">
    <property type="entry name" value="Diphthami_syn_2"/>
    <property type="match status" value="1"/>
</dbReference>
<dbReference type="PIRSF" id="PIRSF039123">
    <property type="entry name" value="Diphthamide_synthase"/>
    <property type="match status" value="1"/>
</dbReference>
<dbReference type="SUPFAM" id="SSF52402">
    <property type="entry name" value="Adenine nucleotide alpha hydrolases-like"/>
    <property type="match status" value="1"/>
</dbReference>
<reference key="1">
    <citation type="submission" date="2005-09" db="EMBL/GenBank/DDBJ databases">
        <authorList>
            <consortium name="NIH - Mammalian Gene Collection (MGC) project"/>
        </authorList>
    </citation>
    <scope>NUCLEOTIDE SEQUENCE [LARGE SCALE MRNA]</scope>
    <source>
        <strain>Hereford</strain>
        <tissue>Thymus</tissue>
    </source>
</reference>
<evidence type="ECO:0000250" key="1"/>
<evidence type="ECO:0000250" key="2">
    <source>
        <dbReference type="UniProtKB" id="Q9CQ28"/>
    </source>
</evidence>
<evidence type="ECO:0000305" key="3"/>
<protein>
    <recommendedName>
        <fullName>Diphthine--ammonia ligase</fullName>
        <ecNumber>6.3.1.14</ecNumber>
    </recommendedName>
    <alternativeName>
        <fullName>ATP-binding domain-containing protein 4</fullName>
    </alternativeName>
    <alternativeName>
        <fullName>Diphthamide synthase</fullName>
    </alternativeName>
    <alternativeName>
        <fullName>Diphthamide synthetase</fullName>
    </alternativeName>
    <alternativeName>
        <fullName>Protein DPH6 homolog</fullName>
    </alternativeName>
</protein>
<name>DPH6_BOVIN</name>
<sequence>MRVAALISGGKDSCYNMMQCVAAGHQIVALANLRPAENQVGSDELDSYMYQTVGHHAIDLYAEAMALPLYRRTIRGKSVDTGPVYTKCEGDEVEDLYELLKLVKEKEEVEGISVGAILSDYQRVRVENVCKRLNLQPLAYLWQRNQEDLLQEMISSNIQAIIIKVAALGLDPDKHLGKPLDQMEPYLLELSKKYGVHVCGEGGEYETFTLDCPLFKKKIIVDSSEVVTHSADAFAPVAYLRFLELHLEDKVSPVPDNCRTSNDIHNS</sequence>
<gene>
    <name type="primary">DPH6</name>
    <name type="synonym">ATPBD4</name>
</gene>
<organism>
    <name type="scientific">Bos taurus</name>
    <name type="common">Bovine</name>
    <dbReference type="NCBI Taxonomy" id="9913"/>
    <lineage>
        <taxon>Eukaryota</taxon>
        <taxon>Metazoa</taxon>
        <taxon>Chordata</taxon>
        <taxon>Craniata</taxon>
        <taxon>Vertebrata</taxon>
        <taxon>Euteleostomi</taxon>
        <taxon>Mammalia</taxon>
        <taxon>Eutheria</taxon>
        <taxon>Laurasiatheria</taxon>
        <taxon>Artiodactyla</taxon>
        <taxon>Ruminantia</taxon>
        <taxon>Pecora</taxon>
        <taxon>Bovidae</taxon>
        <taxon>Bovinae</taxon>
        <taxon>Bos</taxon>
    </lineage>
</organism>
<keyword id="KW-0067">ATP-binding</keyword>
<keyword id="KW-0436">Ligase</keyword>
<keyword id="KW-0547">Nucleotide-binding</keyword>
<keyword id="KW-0597">Phosphoprotein</keyword>
<keyword id="KW-1185">Reference proteome</keyword>